<sequence length="106" mass="11887">EFRKSDIGSSLPQHFRWSQVGSQSIQLSWDDHKVNGHTPDQVHLFVIPRSSSLQRVEKQVAFSAKTVILEGLHGNTLYYVILTVSAGEEECSITSAQSELRSMCIK</sequence>
<evidence type="ECO:0000255" key="1">
    <source>
        <dbReference type="PROSITE-ProRule" id="PRU00316"/>
    </source>
</evidence>
<dbReference type="EMBL" id="M38398">
    <property type="protein sequence ID" value="AAA63537.1"/>
    <property type="molecule type" value="mRNA"/>
</dbReference>
<dbReference type="SMR" id="P22081"/>
<dbReference type="CDD" id="cd00063">
    <property type="entry name" value="FN3"/>
    <property type="match status" value="1"/>
</dbReference>
<dbReference type="Gene3D" id="2.60.40.10">
    <property type="entry name" value="Immunoglobulins"/>
    <property type="match status" value="1"/>
</dbReference>
<dbReference type="InterPro" id="IPR003961">
    <property type="entry name" value="FN3_dom"/>
</dbReference>
<dbReference type="InterPro" id="IPR036116">
    <property type="entry name" value="FN3_sf"/>
</dbReference>
<dbReference type="InterPro" id="IPR013783">
    <property type="entry name" value="Ig-like_fold"/>
</dbReference>
<dbReference type="SUPFAM" id="SSF49265">
    <property type="entry name" value="Fibronectin type III"/>
    <property type="match status" value="1"/>
</dbReference>
<dbReference type="PROSITE" id="PS50853">
    <property type="entry name" value="FN3"/>
    <property type="match status" value="1"/>
</dbReference>
<organism>
    <name type="scientific">Hydatigena taeniaeformis</name>
    <name type="common">Feline tapeworm</name>
    <name type="synonym">Taenia taeniaeformis</name>
    <dbReference type="NCBI Taxonomy" id="6205"/>
    <lineage>
        <taxon>Eukaryota</taxon>
        <taxon>Metazoa</taxon>
        <taxon>Spiralia</taxon>
        <taxon>Lophotrochozoa</taxon>
        <taxon>Platyhelminthes</taxon>
        <taxon>Cestoda</taxon>
        <taxon>Eucestoda</taxon>
        <taxon>Cyclophyllidea</taxon>
        <taxon>Taeniidae</taxon>
        <taxon>Hydatigera</taxon>
    </lineage>
</organism>
<gene>
    <name type="primary">ONCB</name>
</gene>
<feature type="chain" id="PRO_0000058049" description="Oncosphere antigen B">
    <location>
        <begin position="1" status="less than"/>
        <end position="106"/>
    </location>
</feature>
<feature type="domain" description="Fibronectin type-III" evidence="1">
    <location>
        <begin position="11"/>
        <end position="106"/>
    </location>
</feature>
<feature type="non-terminal residue">
    <location>
        <position position="1"/>
    </location>
</feature>
<name>ONCB_HYDTA</name>
<accession>P22081</accession>
<protein>
    <recommendedName>
        <fullName>Oncosphere antigen B</fullName>
    </recommendedName>
</protein>
<proteinExistence type="evidence at transcript level"/>
<comment type="miscellaneous">
    <text>ONCA and ONCB are the primary targets of protective antibody responses.</text>
</comment>
<reference key="1">
    <citation type="journal article" date="1991" name="Mol. Biochem. Parasitol.">
        <title>Molecular cloning of Taenia taeniaeformis oncosphere antigen genes.</title>
        <authorList>
            <person name="Cougle W.G."/>
            <person name="Lightowlers M.W."/>
            <person name="Bogh H.O."/>
            <person name="Rickard M.D."/>
            <person name="Johnson K.S."/>
        </authorList>
    </citation>
    <scope>NUCLEOTIDE SEQUENCE [MRNA]</scope>
</reference>